<reference key="1">
    <citation type="journal article" date="2000" name="Gen. Comp. Endocrinol.">
        <title>Isolation, cDNA cloning, and growth promoting activity of rabbitfish (Siganus guttatus) growth hormone.</title>
        <authorList>
            <person name="Ayson F.G."/>
            <person name="de Jesus E.G."/>
            <person name="Amemiya Y."/>
            <person name="Moriyama S."/>
            <person name="Hirano T."/>
            <person name="Kawauchi H."/>
        </authorList>
    </citation>
    <scope>NUCLEOTIDE SEQUENCE [MRNA]</scope>
    <source>
        <tissue>Pituitary</tissue>
    </source>
</reference>
<comment type="function">
    <text>Growth hormone plays an important role in growth control and is involved in the regulation of several anabolic processes. Implicated as an osmoregulatory substance important for seawater adaptation.</text>
</comment>
<comment type="subcellular location">
    <subcellularLocation>
        <location>Secreted</location>
    </subcellularLocation>
</comment>
<comment type="similarity">
    <text evidence="2">Belongs to the somatotropin/prolactin family.</text>
</comment>
<feature type="signal peptide" evidence="1">
    <location>
        <begin position="1"/>
        <end position="18"/>
    </location>
</feature>
<feature type="chain" id="PRO_0000033055" description="Somatotropin">
    <location>
        <begin position="19"/>
        <end position="196"/>
    </location>
</feature>
<feature type="binding site" evidence="1">
    <location>
        <position position="35"/>
    </location>
    <ligand>
        <name>Zn(2+)</name>
        <dbReference type="ChEBI" id="CHEBI:29105"/>
    </ligand>
</feature>
<feature type="binding site" evidence="1">
    <location>
        <position position="178"/>
    </location>
    <ligand>
        <name>Zn(2+)</name>
        <dbReference type="ChEBI" id="CHEBI:29105"/>
    </ligand>
</feature>
<feature type="modified residue" description="Pyrrolidone carboxylic acid" evidence="1">
    <location>
        <position position="19"/>
    </location>
</feature>
<feature type="disulfide bond" evidence="1">
    <location>
        <begin position="69"/>
        <end position="169"/>
    </location>
</feature>
<feature type="disulfide bond" evidence="1">
    <location>
        <begin position="186"/>
        <end position="194"/>
    </location>
</feature>
<organism>
    <name type="scientific">Siganus guttatus</name>
    <name type="common">Orange-spotted spinefoot</name>
    <name type="synonym">Chaetodon guttatus</name>
    <dbReference type="NCBI Taxonomy" id="92439"/>
    <lineage>
        <taxon>Eukaryota</taxon>
        <taxon>Metazoa</taxon>
        <taxon>Chordata</taxon>
        <taxon>Craniata</taxon>
        <taxon>Vertebrata</taxon>
        <taxon>Euteleostomi</taxon>
        <taxon>Actinopterygii</taxon>
        <taxon>Neopterygii</taxon>
        <taxon>Teleostei</taxon>
        <taxon>Neoteleostei</taxon>
        <taxon>Acanthomorphata</taxon>
        <taxon>Eupercaria</taxon>
        <taxon>Siganidae</taxon>
        <taxon>Siganus</taxon>
    </lineage>
</organism>
<proteinExistence type="evidence at transcript level"/>
<evidence type="ECO:0000250" key="1"/>
<evidence type="ECO:0000305" key="2"/>
<keyword id="KW-1015">Disulfide bond</keyword>
<keyword id="KW-0372">Hormone</keyword>
<keyword id="KW-0479">Metal-binding</keyword>
<keyword id="KW-0873">Pyrrolidone carboxylic acid</keyword>
<keyword id="KW-0964">Secreted</keyword>
<keyword id="KW-0732">Signal</keyword>
<keyword id="KW-0862">Zinc</keyword>
<name>SOMA_SIGGU</name>
<protein>
    <recommendedName>
        <fullName>Somatotropin</fullName>
    </recommendedName>
    <alternativeName>
        <fullName>Growth hormone</fullName>
    </alternativeName>
</protein>
<dbReference type="EMBL" id="AB031298">
    <property type="protein sequence ID" value="BAA92144.1"/>
    <property type="molecule type" value="mRNA"/>
</dbReference>
<dbReference type="SMR" id="Q9IBE5"/>
<dbReference type="GO" id="GO:0005615">
    <property type="term" value="C:extracellular space"/>
    <property type="evidence" value="ECO:0007669"/>
    <property type="project" value="InterPro"/>
</dbReference>
<dbReference type="GO" id="GO:0070186">
    <property type="term" value="F:growth hormone activity"/>
    <property type="evidence" value="ECO:0007669"/>
    <property type="project" value="TreeGrafter"/>
</dbReference>
<dbReference type="GO" id="GO:0005131">
    <property type="term" value="F:growth hormone receptor binding"/>
    <property type="evidence" value="ECO:0007669"/>
    <property type="project" value="InterPro"/>
</dbReference>
<dbReference type="GO" id="GO:0046872">
    <property type="term" value="F:metal ion binding"/>
    <property type="evidence" value="ECO:0007669"/>
    <property type="project" value="UniProtKB-KW"/>
</dbReference>
<dbReference type="GO" id="GO:0048513">
    <property type="term" value="P:animal organ development"/>
    <property type="evidence" value="ECO:0007669"/>
    <property type="project" value="TreeGrafter"/>
</dbReference>
<dbReference type="GO" id="GO:0060396">
    <property type="term" value="P:growth hormone receptor signaling pathway"/>
    <property type="evidence" value="ECO:0007669"/>
    <property type="project" value="TreeGrafter"/>
</dbReference>
<dbReference type="GO" id="GO:0045927">
    <property type="term" value="P:positive regulation of growth"/>
    <property type="evidence" value="ECO:0007669"/>
    <property type="project" value="TreeGrafter"/>
</dbReference>
<dbReference type="GO" id="GO:0046427">
    <property type="term" value="P:positive regulation of receptor signaling pathway via JAK-STAT"/>
    <property type="evidence" value="ECO:0007669"/>
    <property type="project" value="TreeGrafter"/>
</dbReference>
<dbReference type="GO" id="GO:0031667">
    <property type="term" value="P:response to nutrient levels"/>
    <property type="evidence" value="ECO:0007669"/>
    <property type="project" value="TreeGrafter"/>
</dbReference>
<dbReference type="CDD" id="cd10285">
    <property type="entry name" value="somatotropin_like"/>
    <property type="match status" value="1"/>
</dbReference>
<dbReference type="Gene3D" id="1.20.1250.10">
    <property type="match status" value="1"/>
</dbReference>
<dbReference type="InterPro" id="IPR009079">
    <property type="entry name" value="4_helix_cytokine-like_core"/>
</dbReference>
<dbReference type="InterPro" id="IPR034975">
    <property type="entry name" value="Somatotropin"/>
</dbReference>
<dbReference type="InterPro" id="IPR001400">
    <property type="entry name" value="Somatotropin/Prolactin"/>
</dbReference>
<dbReference type="InterPro" id="IPR018116">
    <property type="entry name" value="Somatotropin_CS"/>
</dbReference>
<dbReference type="PANTHER" id="PTHR11417:SF2">
    <property type="entry name" value="SOMATOTROPIN"/>
    <property type="match status" value="1"/>
</dbReference>
<dbReference type="PANTHER" id="PTHR11417">
    <property type="entry name" value="SOMATOTROPIN,PROLACTIN"/>
    <property type="match status" value="1"/>
</dbReference>
<dbReference type="Pfam" id="PF00103">
    <property type="entry name" value="Hormone_1"/>
    <property type="match status" value="1"/>
</dbReference>
<dbReference type="PRINTS" id="PR00836">
    <property type="entry name" value="SOMATOTROPIN"/>
</dbReference>
<dbReference type="SUPFAM" id="SSF47266">
    <property type="entry name" value="4-helical cytokines"/>
    <property type="match status" value="1"/>
</dbReference>
<dbReference type="PROSITE" id="PS00266">
    <property type="entry name" value="SOMATOTROPIN_1"/>
    <property type="match status" value="1"/>
</dbReference>
<dbReference type="PROSITE" id="PS00338">
    <property type="entry name" value="SOMATOTROPIN_2"/>
    <property type="match status" value="1"/>
</dbReference>
<accession>Q9IBE5</accession>
<gene>
    <name type="primary">gh</name>
</gene>
<sequence>MEKVVLLLSVLSLGVVCPQPMTDSQRFSIAVSRIHYLHQVAQRSFFTFESSLSAEDQRQLNKIFLQDSCNSDYIRSPIDKHETQRSSVMKLLSISYRLVESWEYPSRALIGGSTNQISNKLSELKLGIRLLMEANQDGAEIFPESSAFQLDYQSLGTDDPRQMYELLACFKKDMHKVETYLTVAKCRLSPEANCTL</sequence>